<accession>A9HBJ2</accession>
<accession>B5ZGL7</accession>
<keyword id="KW-0328">Glycosyltransferase</keyword>
<keyword id="KW-0479">Metal-binding</keyword>
<keyword id="KW-0671">Queuosine biosynthesis</keyword>
<keyword id="KW-1185">Reference proteome</keyword>
<keyword id="KW-0808">Transferase</keyword>
<keyword id="KW-0819">tRNA processing</keyword>
<keyword id="KW-0862">Zinc</keyword>
<reference key="1">
    <citation type="journal article" date="2009" name="BMC Genomics">
        <title>Complete genome sequence of the sugarcane nitrogen-fixing endophyte Gluconacetobacter diazotrophicus Pal5.</title>
        <authorList>
            <person name="Bertalan M."/>
            <person name="Albano R."/>
            <person name="de Padua V."/>
            <person name="Rouws L."/>
            <person name="Rojas C."/>
            <person name="Hemerly A."/>
            <person name="Teixeira K."/>
            <person name="Schwab S."/>
            <person name="Araujo J."/>
            <person name="Oliveira A."/>
            <person name="Franca L."/>
            <person name="Magalhaes V."/>
            <person name="Alqueres S."/>
            <person name="Cardoso A."/>
            <person name="Almeida W."/>
            <person name="Loureiro M.M."/>
            <person name="Nogueira E."/>
            <person name="Cidade D."/>
            <person name="Oliveira D."/>
            <person name="Simao T."/>
            <person name="Macedo J."/>
            <person name="Valadao A."/>
            <person name="Dreschsel M."/>
            <person name="Freitas F."/>
            <person name="Vidal M."/>
            <person name="Guedes H."/>
            <person name="Rodrigues E."/>
            <person name="Meneses C."/>
            <person name="Brioso P."/>
            <person name="Pozzer L."/>
            <person name="Figueiredo D."/>
            <person name="Montano H."/>
            <person name="Junior J."/>
            <person name="de Souza Filho G."/>
            <person name="Martin Quintana Flores V."/>
            <person name="Ferreira B."/>
            <person name="Branco A."/>
            <person name="Gonzalez P."/>
            <person name="Guillobel H."/>
            <person name="Lemos M."/>
            <person name="Seibel L."/>
            <person name="Macedo J."/>
            <person name="Alves-Ferreira M."/>
            <person name="Sachetto-Martins G."/>
            <person name="Coelho A."/>
            <person name="Santos E."/>
            <person name="Amaral G."/>
            <person name="Neves A."/>
            <person name="Pacheco A.B."/>
            <person name="Carvalho D."/>
            <person name="Lery L."/>
            <person name="Bisch P."/>
            <person name="Rossle S.C."/>
            <person name="Urmenyi T."/>
            <person name="Rael Pereira A."/>
            <person name="Silva R."/>
            <person name="Rondinelli E."/>
            <person name="von Kruger W."/>
            <person name="Martins O."/>
            <person name="Baldani J.I."/>
            <person name="Ferreira P.C."/>
        </authorList>
    </citation>
    <scope>NUCLEOTIDE SEQUENCE [LARGE SCALE GENOMIC DNA]</scope>
    <source>
        <strain>ATCC 49037 / DSM 5601 / CCUG 37298 / CIP 103539 / LMG 7603 / PAl5</strain>
    </source>
</reference>
<reference key="2">
    <citation type="journal article" date="2010" name="Stand. Genomic Sci.">
        <title>Two genome sequences of the same bacterial strain, Gluconacetobacter diazotrophicus PAl 5, suggest a new standard in genome sequence submission.</title>
        <authorList>
            <person name="Giongo A."/>
            <person name="Tyler H.L."/>
            <person name="Zipperer U.N."/>
            <person name="Triplett E.W."/>
        </authorList>
    </citation>
    <scope>NUCLEOTIDE SEQUENCE [LARGE SCALE GENOMIC DNA]</scope>
    <source>
        <strain>ATCC 49037 / DSM 5601 / CCUG 37298 / CIP 103539 / LMG 7603 / PAl5</strain>
    </source>
</reference>
<organism>
    <name type="scientific">Gluconacetobacter diazotrophicus (strain ATCC 49037 / DSM 5601 / CCUG 37298 / CIP 103539 / LMG 7603 / PAl5)</name>
    <dbReference type="NCBI Taxonomy" id="272568"/>
    <lineage>
        <taxon>Bacteria</taxon>
        <taxon>Pseudomonadati</taxon>
        <taxon>Pseudomonadota</taxon>
        <taxon>Alphaproteobacteria</taxon>
        <taxon>Acetobacterales</taxon>
        <taxon>Acetobacteraceae</taxon>
        <taxon>Gluconacetobacter</taxon>
    </lineage>
</organism>
<dbReference type="EC" id="2.4.2.29" evidence="1"/>
<dbReference type="EMBL" id="AM889285">
    <property type="protein sequence ID" value="CAP54820.1"/>
    <property type="molecule type" value="Genomic_DNA"/>
</dbReference>
<dbReference type="EMBL" id="CP001189">
    <property type="protein sequence ID" value="ACI50925.1"/>
    <property type="molecule type" value="Genomic_DNA"/>
</dbReference>
<dbReference type="RefSeq" id="WP_012223664.1">
    <property type="nucleotide sequence ID" value="NC_010125.1"/>
</dbReference>
<dbReference type="RefSeq" id="WP_012553616.1">
    <property type="nucleotide sequence ID" value="NC_011365.1"/>
</dbReference>
<dbReference type="SMR" id="A9HBJ2"/>
<dbReference type="STRING" id="272568.GDI0877"/>
<dbReference type="KEGG" id="gdi:GDI0877"/>
<dbReference type="KEGG" id="gdj:Gdia_1142"/>
<dbReference type="eggNOG" id="COG0343">
    <property type="taxonomic scope" value="Bacteria"/>
</dbReference>
<dbReference type="HOGENOM" id="CLU_022060_0_1_5"/>
<dbReference type="OrthoDB" id="9805417at2"/>
<dbReference type="UniPathway" id="UPA00392"/>
<dbReference type="Proteomes" id="UP000001176">
    <property type="component" value="Chromosome"/>
</dbReference>
<dbReference type="GO" id="GO:0005829">
    <property type="term" value="C:cytosol"/>
    <property type="evidence" value="ECO:0007669"/>
    <property type="project" value="TreeGrafter"/>
</dbReference>
<dbReference type="GO" id="GO:0046872">
    <property type="term" value="F:metal ion binding"/>
    <property type="evidence" value="ECO:0007669"/>
    <property type="project" value="UniProtKB-KW"/>
</dbReference>
<dbReference type="GO" id="GO:0008479">
    <property type="term" value="F:tRNA-guanosine(34) queuine transglycosylase activity"/>
    <property type="evidence" value="ECO:0007669"/>
    <property type="project" value="UniProtKB-UniRule"/>
</dbReference>
<dbReference type="GO" id="GO:0008616">
    <property type="term" value="P:queuosine biosynthetic process"/>
    <property type="evidence" value="ECO:0007669"/>
    <property type="project" value="UniProtKB-UniRule"/>
</dbReference>
<dbReference type="GO" id="GO:0002099">
    <property type="term" value="P:tRNA wobble guanine modification"/>
    <property type="evidence" value="ECO:0007669"/>
    <property type="project" value="TreeGrafter"/>
</dbReference>
<dbReference type="GO" id="GO:0101030">
    <property type="term" value="P:tRNA-guanine transglycosylation"/>
    <property type="evidence" value="ECO:0007669"/>
    <property type="project" value="InterPro"/>
</dbReference>
<dbReference type="FunFam" id="3.20.20.105:FF:000001">
    <property type="entry name" value="Queuine tRNA-ribosyltransferase"/>
    <property type="match status" value="1"/>
</dbReference>
<dbReference type="Gene3D" id="3.20.20.105">
    <property type="entry name" value="Queuine tRNA-ribosyltransferase-like"/>
    <property type="match status" value="1"/>
</dbReference>
<dbReference type="HAMAP" id="MF_00168">
    <property type="entry name" value="Q_tRNA_Tgt"/>
    <property type="match status" value="1"/>
</dbReference>
<dbReference type="InterPro" id="IPR050076">
    <property type="entry name" value="ArchSynthase1/Queuine_TRR"/>
</dbReference>
<dbReference type="InterPro" id="IPR004803">
    <property type="entry name" value="TGT"/>
</dbReference>
<dbReference type="InterPro" id="IPR036511">
    <property type="entry name" value="TGT-like_sf"/>
</dbReference>
<dbReference type="InterPro" id="IPR002616">
    <property type="entry name" value="tRNA_ribo_trans-like"/>
</dbReference>
<dbReference type="NCBIfam" id="TIGR00430">
    <property type="entry name" value="Q_tRNA_tgt"/>
    <property type="match status" value="1"/>
</dbReference>
<dbReference type="NCBIfam" id="TIGR00449">
    <property type="entry name" value="tgt_general"/>
    <property type="match status" value="1"/>
</dbReference>
<dbReference type="PANTHER" id="PTHR46499">
    <property type="entry name" value="QUEUINE TRNA-RIBOSYLTRANSFERASE"/>
    <property type="match status" value="1"/>
</dbReference>
<dbReference type="PANTHER" id="PTHR46499:SF1">
    <property type="entry name" value="QUEUINE TRNA-RIBOSYLTRANSFERASE"/>
    <property type="match status" value="1"/>
</dbReference>
<dbReference type="Pfam" id="PF01702">
    <property type="entry name" value="TGT"/>
    <property type="match status" value="1"/>
</dbReference>
<dbReference type="SUPFAM" id="SSF51713">
    <property type="entry name" value="tRNA-guanine transglycosylase"/>
    <property type="match status" value="1"/>
</dbReference>
<comment type="function">
    <text evidence="1">Catalyzes the base-exchange of a guanine (G) residue with the queuine precursor 7-aminomethyl-7-deazaguanine (PreQ1) at position 34 (anticodon wobble position) in tRNAs with GU(N) anticodons (tRNA-Asp, -Asn, -His and -Tyr). Catalysis occurs through a double-displacement mechanism. The nucleophile active site attacks the C1' of nucleotide 34 to detach the guanine base from the RNA, forming a covalent enzyme-RNA intermediate. The proton acceptor active site deprotonates the incoming PreQ1, allowing a nucleophilic attack on the C1' of the ribose to form the product. After dissociation, two additional enzymatic reactions on the tRNA convert PreQ1 to queuine (Q), resulting in the hypermodified nucleoside queuosine (7-(((4,5-cis-dihydroxy-2-cyclopenten-1-yl)amino)methyl)-7-deazaguanosine).</text>
</comment>
<comment type="catalytic activity">
    <reaction evidence="1">
        <text>7-aminomethyl-7-carbaguanine + guanosine(34) in tRNA = 7-aminomethyl-7-carbaguanosine(34) in tRNA + guanine</text>
        <dbReference type="Rhea" id="RHEA:24104"/>
        <dbReference type="Rhea" id="RHEA-COMP:10341"/>
        <dbReference type="Rhea" id="RHEA-COMP:10342"/>
        <dbReference type="ChEBI" id="CHEBI:16235"/>
        <dbReference type="ChEBI" id="CHEBI:58703"/>
        <dbReference type="ChEBI" id="CHEBI:74269"/>
        <dbReference type="ChEBI" id="CHEBI:82833"/>
        <dbReference type="EC" id="2.4.2.29"/>
    </reaction>
</comment>
<comment type="cofactor">
    <cofactor evidence="1">
        <name>Zn(2+)</name>
        <dbReference type="ChEBI" id="CHEBI:29105"/>
    </cofactor>
    <text evidence="1">Binds 1 zinc ion per subunit.</text>
</comment>
<comment type="pathway">
    <text evidence="1">tRNA modification; tRNA-queuosine biosynthesis.</text>
</comment>
<comment type="subunit">
    <text evidence="1">Homodimer. Within each dimer, one monomer is responsible for RNA recognition and catalysis, while the other monomer binds to the replacement base PreQ1.</text>
</comment>
<comment type="similarity">
    <text evidence="1">Belongs to the queuine tRNA-ribosyltransferase family.</text>
</comment>
<proteinExistence type="inferred from homology"/>
<sequence length="387" mass="42198">MSTAFRWVEQARVGRARAGHLHTAHGVVPTPTFMPVGTVGTVKAMTMDSVRSTGAGIVLGNTYHLMLRPGAEKVRALGGLHRFMDWPGPILTDSGGFQVMSLGALRKLDQDGVTFNSHIDGSKHRLTPERSTDIQHALDATITMCFDECPALPAPPETIAQSMRLSMRWAARCREAFVPRAGYAQYGIIQGGTEPELRAESVRALTGIGFEGYAIGGLAVGEGQELMYATLDATVPLIPHDSPRYLMGVGTPDDLLGAVERGVDMFDCVMPTRAGRTARAYTERGTLNLRNARHADDTRPLSPHCDCLACTRHSRAYLHHLFRANEILGPMLLTWHNLAYYQRLMRGMRGAIVAGTLGAHAAGLRAEWAMEDWTPDEMPPPDLPPVP</sequence>
<feature type="chain" id="PRO_1000077010" description="Queuine tRNA-ribosyltransferase">
    <location>
        <begin position="1"/>
        <end position="387"/>
    </location>
</feature>
<feature type="region of interest" description="RNA binding" evidence="1">
    <location>
        <begin position="248"/>
        <end position="254"/>
    </location>
</feature>
<feature type="region of interest" description="RNA binding; important for wobble base 34 recognition" evidence="1">
    <location>
        <begin position="272"/>
        <end position="276"/>
    </location>
</feature>
<feature type="active site" description="Proton acceptor" evidence="1">
    <location>
        <position position="93"/>
    </location>
</feature>
<feature type="active site" description="Nucleophile" evidence="1">
    <location>
        <position position="267"/>
    </location>
</feature>
<feature type="binding site" evidence="1">
    <location>
        <begin position="93"/>
        <end position="97"/>
    </location>
    <ligand>
        <name>substrate</name>
    </ligand>
</feature>
<feature type="binding site" evidence="1">
    <location>
        <position position="147"/>
    </location>
    <ligand>
        <name>substrate</name>
    </ligand>
</feature>
<feature type="binding site" evidence="1">
    <location>
        <position position="190"/>
    </location>
    <ligand>
        <name>substrate</name>
    </ligand>
</feature>
<feature type="binding site" evidence="1">
    <location>
        <position position="217"/>
    </location>
    <ligand>
        <name>substrate</name>
    </ligand>
</feature>
<feature type="binding site" evidence="1">
    <location>
        <position position="305"/>
    </location>
    <ligand>
        <name>Zn(2+)</name>
        <dbReference type="ChEBI" id="CHEBI:29105"/>
    </ligand>
</feature>
<feature type="binding site" evidence="1">
    <location>
        <position position="307"/>
    </location>
    <ligand>
        <name>Zn(2+)</name>
        <dbReference type="ChEBI" id="CHEBI:29105"/>
    </ligand>
</feature>
<feature type="binding site" evidence="1">
    <location>
        <position position="310"/>
    </location>
    <ligand>
        <name>Zn(2+)</name>
        <dbReference type="ChEBI" id="CHEBI:29105"/>
    </ligand>
</feature>
<feature type="binding site" evidence="1">
    <location>
        <position position="336"/>
    </location>
    <ligand>
        <name>Zn(2+)</name>
        <dbReference type="ChEBI" id="CHEBI:29105"/>
    </ligand>
</feature>
<feature type="sequence conflict" description="In Ref. 2; ACI50925." evidence="2" ref="2">
    <original>V</original>
    <variation>M</variation>
    <location>
        <position position="13"/>
    </location>
</feature>
<feature type="sequence conflict" description="In Ref. 2; ACI50925." evidence="2" ref="2">
    <original>E</original>
    <variation>D</variation>
    <location>
        <position position="225"/>
    </location>
</feature>
<feature type="sequence conflict" description="In Ref. 2; ACI50925." evidence="2" ref="2">
    <original>Y</original>
    <variation>F</variation>
    <location>
        <position position="228"/>
    </location>
</feature>
<name>TGT_GLUDA</name>
<evidence type="ECO:0000255" key="1">
    <source>
        <dbReference type="HAMAP-Rule" id="MF_00168"/>
    </source>
</evidence>
<evidence type="ECO:0000305" key="2"/>
<protein>
    <recommendedName>
        <fullName evidence="1">Queuine tRNA-ribosyltransferase</fullName>
        <ecNumber evidence="1">2.4.2.29</ecNumber>
    </recommendedName>
    <alternativeName>
        <fullName evidence="1">Guanine insertion enzyme</fullName>
    </alternativeName>
    <alternativeName>
        <fullName evidence="1">tRNA-guanine transglycosylase</fullName>
    </alternativeName>
</protein>
<gene>
    <name evidence="1" type="primary">tgt</name>
    <name type="ordered locus">GDI0877</name>
    <name type="ordered locus">Gdia_1142</name>
</gene>